<reference key="1">
    <citation type="journal article" date="2004" name="Proc. Natl. Acad. Sci. U.S.A.">
        <title>The louse-borne human pathogen Bartonella quintana is a genomic derivative of the zoonotic agent Bartonella henselae.</title>
        <authorList>
            <person name="Alsmark U.C.M."/>
            <person name="Frank A.C."/>
            <person name="Karlberg E.O."/>
            <person name="Legault B.-A."/>
            <person name="Ardell D.H."/>
            <person name="Canbaeck B."/>
            <person name="Eriksson A.-S."/>
            <person name="Naeslund A.K."/>
            <person name="Handley S.A."/>
            <person name="Huvet M."/>
            <person name="La Scola B."/>
            <person name="Holmberg M."/>
            <person name="Andersson S.G.E."/>
        </authorList>
    </citation>
    <scope>NUCLEOTIDE SEQUENCE [LARGE SCALE GENOMIC DNA]</scope>
    <source>
        <strain>Toulouse</strain>
    </source>
</reference>
<dbReference type="EC" id="3.6.5.-" evidence="1"/>
<dbReference type="EMBL" id="BX897700">
    <property type="protein sequence ID" value="CAF25649.1"/>
    <property type="molecule type" value="Genomic_DNA"/>
</dbReference>
<dbReference type="SMR" id="Q6G0S8"/>
<dbReference type="KEGG" id="bqu:BQ01460"/>
<dbReference type="eggNOG" id="COG0536">
    <property type="taxonomic scope" value="Bacteria"/>
</dbReference>
<dbReference type="HOGENOM" id="CLU_011747_2_0_5"/>
<dbReference type="OrthoDB" id="9807318at2"/>
<dbReference type="Proteomes" id="UP000000597">
    <property type="component" value="Chromosome"/>
</dbReference>
<dbReference type="GO" id="GO:0005737">
    <property type="term" value="C:cytoplasm"/>
    <property type="evidence" value="ECO:0007669"/>
    <property type="project" value="UniProtKB-SubCell"/>
</dbReference>
<dbReference type="GO" id="GO:0005525">
    <property type="term" value="F:GTP binding"/>
    <property type="evidence" value="ECO:0007669"/>
    <property type="project" value="UniProtKB-UniRule"/>
</dbReference>
<dbReference type="GO" id="GO:0003924">
    <property type="term" value="F:GTPase activity"/>
    <property type="evidence" value="ECO:0007669"/>
    <property type="project" value="UniProtKB-UniRule"/>
</dbReference>
<dbReference type="GO" id="GO:0000287">
    <property type="term" value="F:magnesium ion binding"/>
    <property type="evidence" value="ECO:0007669"/>
    <property type="project" value="InterPro"/>
</dbReference>
<dbReference type="GO" id="GO:0042254">
    <property type="term" value="P:ribosome biogenesis"/>
    <property type="evidence" value="ECO:0007669"/>
    <property type="project" value="UniProtKB-UniRule"/>
</dbReference>
<dbReference type="CDD" id="cd01898">
    <property type="entry name" value="Obg"/>
    <property type="match status" value="1"/>
</dbReference>
<dbReference type="FunFam" id="2.70.210.12:FF:000001">
    <property type="entry name" value="GTPase Obg"/>
    <property type="match status" value="1"/>
</dbReference>
<dbReference type="Gene3D" id="2.70.210.12">
    <property type="entry name" value="GTP1/OBG domain"/>
    <property type="match status" value="1"/>
</dbReference>
<dbReference type="Gene3D" id="3.40.50.300">
    <property type="entry name" value="P-loop containing nucleotide triphosphate hydrolases"/>
    <property type="match status" value="1"/>
</dbReference>
<dbReference type="HAMAP" id="MF_01454">
    <property type="entry name" value="GTPase_Obg"/>
    <property type="match status" value="1"/>
</dbReference>
<dbReference type="InterPro" id="IPR031167">
    <property type="entry name" value="G_OBG"/>
</dbReference>
<dbReference type="InterPro" id="IPR006073">
    <property type="entry name" value="GTP-bd"/>
</dbReference>
<dbReference type="InterPro" id="IPR014100">
    <property type="entry name" value="GTP-bd_Obg/CgtA"/>
</dbReference>
<dbReference type="InterPro" id="IPR006074">
    <property type="entry name" value="GTP1-OBG_CS"/>
</dbReference>
<dbReference type="InterPro" id="IPR006169">
    <property type="entry name" value="GTP1_OBG_dom"/>
</dbReference>
<dbReference type="InterPro" id="IPR036726">
    <property type="entry name" value="GTP1_OBG_dom_sf"/>
</dbReference>
<dbReference type="InterPro" id="IPR045086">
    <property type="entry name" value="OBG_GTPase"/>
</dbReference>
<dbReference type="InterPro" id="IPR027417">
    <property type="entry name" value="P-loop_NTPase"/>
</dbReference>
<dbReference type="NCBIfam" id="TIGR02729">
    <property type="entry name" value="Obg_CgtA"/>
    <property type="match status" value="1"/>
</dbReference>
<dbReference type="NCBIfam" id="NF008955">
    <property type="entry name" value="PRK12297.1"/>
    <property type="match status" value="1"/>
</dbReference>
<dbReference type="NCBIfam" id="NF008956">
    <property type="entry name" value="PRK12299.1"/>
    <property type="match status" value="1"/>
</dbReference>
<dbReference type="PANTHER" id="PTHR11702">
    <property type="entry name" value="DEVELOPMENTALLY REGULATED GTP-BINDING PROTEIN-RELATED"/>
    <property type="match status" value="1"/>
</dbReference>
<dbReference type="PANTHER" id="PTHR11702:SF31">
    <property type="entry name" value="MITOCHONDRIAL RIBOSOME-ASSOCIATED GTPASE 2"/>
    <property type="match status" value="1"/>
</dbReference>
<dbReference type="Pfam" id="PF01018">
    <property type="entry name" value="GTP1_OBG"/>
    <property type="match status" value="1"/>
</dbReference>
<dbReference type="Pfam" id="PF01926">
    <property type="entry name" value="MMR_HSR1"/>
    <property type="match status" value="1"/>
</dbReference>
<dbReference type="PIRSF" id="PIRSF002401">
    <property type="entry name" value="GTP_bd_Obg/CgtA"/>
    <property type="match status" value="1"/>
</dbReference>
<dbReference type="PRINTS" id="PR00326">
    <property type="entry name" value="GTP1OBG"/>
</dbReference>
<dbReference type="SUPFAM" id="SSF82051">
    <property type="entry name" value="Obg GTP-binding protein N-terminal domain"/>
    <property type="match status" value="1"/>
</dbReference>
<dbReference type="SUPFAM" id="SSF52540">
    <property type="entry name" value="P-loop containing nucleoside triphosphate hydrolases"/>
    <property type="match status" value="1"/>
</dbReference>
<dbReference type="PROSITE" id="PS51710">
    <property type="entry name" value="G_OBG"/>
    <property type="match status" value="1"/>
</dbReference>
<dbReference type="PROSITE" id="PS00905">
    <property type="entry name" value="GTP1_OBG"/>
    <property type="match status" value="1"/>
</dbReference>
<dbReference type="PROSITE" id="PS51883">
    <property type="entry name" value="OBG"/>
    <property type="match status" value="1"/>
</dbReference>
<keyword id="KW-0963">Cytoplasm</keyword>
<keyword id="KW-0342">GTP-binding</keyword>
<keyword id="KW-0378">Hydrolase</keyword>
<keyword id="KW-0460">Magnesium</keyword>
<keyword id="KW-0479">Metal-binding</keyword>
<keyword id="KW-0547">Nucleotide-binding</keyword>
<organism>
    <name type="scientific">Bartonella quintana (strain Toulouse)</name>
    <name type="common">Rochalimaea quintana</name>
    <dbReference type="NCBI Taxonomy" id="283165"/>
    <lineage>
        <taxon>Bacteria</taxon>
        <taxon>Pseudomonadati</taxon>
        <taxon>Pseudomonadota</taxon>
        <taxon>Alphaproteobacteria</taxon>
        <taxon>Hyphomicrobiales</taxon>
        <taxon>Bartonellaceae</taxon>
        <taxon>Bartonella</taxon>
    </lineage>
</organism>
<feature type="chain" id="PRO_0000385737" description="GTPase Obg">
    <location>
        <begin position="1"/>
        <end position="341"/>
    </location>
</feature>
<feature type="domain" description="Obg" evidence="2">
    <location>
        <begin position="1"/>
        <end position="159"/>
    </location>
</feature>
<feature type="domain" description="OBG-type G" evidence="1">
    <location>
        <begin position="160"/>
        <end position="327"/>
    </location>
</feature>
<feature type="binding site" evidence="1">
    <location>
        <begin position="166"/>
        <end position="173"/>
    </location>
    <ligand>
        <name>GTP</name>
        <dbReference type="ChEBI" id="CHEBI:37565"/>
    </ligand>
</feature>
<feature type="binding site" evidence="1">
    <location>
        <position position="173"/>
    </location>
    <ligand>
        <name>Mg(2+)</name>
        <dbReference type="ChEBI" id="CHEBI:18420"/>
    </ligand>
</feature>
<feature type="binding site" evidence="1">
    <location>
        <begin position="191"/>
        <end position="195"/>
    </location>
    <ligand>
        <name>GTP</name>
        <dbReference type="ChEBI" id="CHEBI:37565"/>
    </ligand>
</feature>
<feature type="binding site" evidence="1">
    <location>
        <position position="193"/>
    </location>
    <ligand>
        <name>Mg(2+)</name>
        <dbReference type="ChEBI" id="CHEBI:18420"/>
    </ligand>
</feature>
<feature type="binding site" evidence="1">
    <location>
        <begin position="212"/>
        <end position="215"/>
    </location>
    <ligand>
        <name>GTP</name>
        <dbReference type="ChEBI" id="CHEBI:37565"/>
    </ligand>
</feature>
<feature type="binding site" evidence="1">
    <location>
        <begin position="279"/>
        <end position="282"/>
    </location>
    <ligand>
        <name>GTP</name>
        <dbReference type="ChEBI" id="CHEBI:37565"/>
    </ligand>
</feature>
<feature type="binding site" evidence="1">
    <location>
        <begin position="308"/>
        <end position="310"/>
    </location>
    <ligand>
        <name>GTP</name>
        <dbReference type="ChEBI" id="CHEBI:37565"/>
    </ligand>
</feature>
<comment type="function">
    <text evidence="1">An essential GTPase which binds GTP, GDP and possibly (p)ppGpp with moderate affinity, with high nucleotide exchange rates and a fairly low GTP hydrolysis rate. Plays a role in control of the cell cycle, stress response, ribosome biogenesis and in those bacteria that undergo differentiation, in morphogenesis control.</text>
</comment>
<comment type="cofactor">
    <cofactor evidence="1">
        <name>Mg(2+)</name>
        <dbReference type="ChEBI" id="CHEBI:18420"/>
    </cofactor>
</comment>
<comment type="subunit">
    <text evidence="1">Monomer.</text>
</comment>
<comment type="subcellular location">
    <subcellularLocation>
        <location evidence="1">Cytoplasm</location>
    </subcellularLocation>
</comment>
<comment type="similarity">
    <text evidence="1">Belongs to the TRAFAC class OBG-HflX-like GTPase superfamily. OBG GTPase family.</text>
</comment>
<sequence>MKFLDQAKVYIRSGNGGAGAVSFRREKFIEFGGPDGGDGGRGGDVWALVVDGLNTLIDYRYQQHFRAKTGGHGKGRNMTGEKGNDIILKVPVGTQIFEEDNTTLICDLTEVGQRYRLAKGGNGGFGNLHFMNSTNQAPRRANPGLVGEERTLWLRLKLIADAGLIGLPNAGKSTFLASVTAAKPKVADYPFTTLYPHLGVARIDAREFVLADIPGLIEGAHEGVGLGDRFLGHIERCCVLFHLISAQEEDVAKAYQIVRNELKAYGNNLSDKTEIVAISQIDTLTLEERKVKQEVLQRVTGKSVMMFSAVSGESLEAMLRAGAHMIEMVRKEGVDRDVRTD</sequence>
<name>OBG_BARQU</name>
<accession>Q6G0S8</accession>
<protein>
    <recommendedName>
        <fullName evidence="1">GTPase Obg</fullName>
        <ecNumber evidence="1">3.6.5.-</ecNumber>
    </recommendedName>
    <alternativeName>
        <fullName evidence="1">GTP-binding protein Obg</fullName>
    </alternativeName>
</protein>
<evidence type="ECO:0000255" key="1">
    <source>
        <dbReference type="HAMAP-Rule" id="MF_01454"/>
    </source>
</evidence>
<evidence type="ECO:0000255" key="2">
    <source>
        <dbReference type="PROSITE-ProRule" id="PRU01231"/>
    </source>
</evidence>
<proteinExistence type="inferred from homology"/>
<gene>
    <name evidence="1" type="primary">obg</name>
    <name type="ordered locus">BQ01460</name>
</gene>